<organism>
    <name type="scientific">Fowlpox virus (strain NVSL)</name>
    <name type="common">FPV</name>
    <dbReference type="NCBI Taxonomy" id="928301"/>
    <lineage>
        <taxon>Viruses</taxon>
        <taxon>Varidnaviria</taxon>
        <taxon>Bamfordvirae</taxon>
        <taxon>Nucleocytoviricota</taxon>
        <taxon>Pokkesviricetes</taxon>
        <taxon>Chitovirales</taxon>
        <taxon>Poxviridae</taxon>
        <taxon>Chordopoxvirinae</taxon>
        <taxon>Avipoxvirus</taxon>
        <taxon>Fowlpox virus</taxon>
    </lineage>
</organism>
<gene>
    <name type="ordered locus">FPV140</name>
</gene>
<sequence length="327" mass="38014">MAPGDKKQIIFVITTIGRPSSTVVPFKNLEVSEWSYKKGIKNGYDDYRDPPSPKPLPKSKQEPNADDKVGDIEYDEMVSVRDGYYSDVCRLTCTEDTKIFIADHISLWRYIMDNAEKLPNYVVIMEDDNTITGEGFITNLDNITKVLNDNNVDILQLVTHTKLLKDRNSQHLMLLPDLEAFKGSFDVSLSAYIIRQEAVRKLYSYFTNNKPSFDISLEILRIENTLGITRYVVDNDRYVYHDYKLANEFMKNKKNRLSIKSRIDGWIMDNWPSFYHRMYYPLFSVFGKYDITMMFLIAIVIIIGLAIFDINNKLLWLLSGVFLAYSM</sequence>
<proteinExistence type="inferred from homology"/>
<comment type="function">
    <text evidence="1">Envelope protein that binds to the cell surface to provide virion attachment to target cell.</text>
</comment>
<comment type="subcellular location">
    <subcellularLocation>
        <location evidence="4">Virion membrane</location>
        <topology evidence="4">Single-pass membrane protein</topology>
    </subcellularLocation>
</comment>
<comment type="similarity">
    <text evidence="4">Belongs to the poxviruses protein p35 family.</text>
</comment>
<keyword id="KW-0945">Host-virus interaction</keyword>
<keyword id="KW-0426">Late protein</keyword>
<keyword id="KW-0472">Membrane</keyword>
<keyword id="KW-1185">Reference proteome</keyword>
<keyword id="KW-0812">Transmembrane</keyword>
<keyword id="KW-1133">Transmembrane helix</keyword>
<keyword id="KW-1161">Viral attachment to host cell</keyword>
<keyword id="KW-0261">Viral envelope protein</keyword>
<keyword id="KW-0946">Virion</keyword>
<keyword id="KW-1160">Virus entry into host cell</keyword>
<name>VP35_FOWPN</name>
<evidence type="ECO:0000250" key="1"/>
<evidence type="ECO:0000255" key="2"/>
<evidence type="ECO:0000256" key="3">
    <source>
        <dbReference type="SAM" id="MobiDB-lite"/>
    </source>
</evidence>
<evidence type="ECO:0000305" key="4"/>
<organismHost>
    <name type="scientific">Vertebrata</name>
    <dbReference type="NCBI Taxonomy" id="7742"/>
</organismHost>
<dbReference type="EMBL" id="AF198100">
    <property type="protein sequence ID" value="AAF44484.1"/>
    <property type="molecule type" value="Genomic_DNA"/>
</dbReference>
<dbReference type="RefSeq" id="NP_039103.1">
    <property type="nucleotide sequence ID" value="NC_002188.1"/>
</dbReference>
<dbReference type="SMR" id="Q9J590"/>
<dbReference type="GeneID" id="1486688"/>
<dbReference type="KEGG" id="vg:1486688"/>
<dbReference type="Proteomes" id="UP000008597">
    <property type="component" value="Segment"/>
</dbReference>
<dbReference type="GO" id="GO:0016020">
    <property type="term" value="C:membrane"/>
    <property type="evidence" value="ECO:0007669"/>
    <property type="project" value="UniProtKB-KW"/>
</dbReference>
<dbReference type="GO" id="GO:0019031">
    <property type="term" value="C:viral envelope"/>
    <property type="evidence" value="ECO:0007669"/>
    <property type="project" value="UniProtKB-KW"/>
</dbReference>
<dbReference type="GO" id="GO:0055036">
    <property type="term" value="C:virion membrane"/>
    <property type="evidence" value="ECO:0007669"/>
    <property type="project" value="UniProtKB-SubCell"/>
</dbReference>
<dbReference type="GO" id="GO:0046718">
    <property type="term" value="P:symbiont entry into host cell"/>
    <property type="evidence" value="ECO:0007669"/>
    <property type="project" value="UniProtKB-KW"/>
</dbReference>
<dbReference type="GO" id="GO:0019062">
    <property type="term" value="P:virion attachment to host cell"/>
    <property type="evidence" value="ECO:0007669"/>
    <property type="project" value="UniProtKB-KW"/>
</dbReference>
<dbReference type="InterPro" id="IPR004900">
    <property type="entry name" value="Poxvirus_P35"/>
</dbReference>
<dbReference type="Pfam" id="PF03213">
    <property type="entry name" value="Pox_P35"/>
    <property type="match status" value="1"/>
</dbReference>
<accession>Q9J590</accession>
<protein>
    <recommendedName>
        <fullName>Immunodominant envelope protein p35</fullName>
    </recommendedName>
    <alternativeName>
        <fullName>Ag35</fullName>
    </alternativeName>
    <alternativeName>
        <fullName>Virion envelope protein p35</fullName>
    </alternativeName>
</protein>
<feature type="chain" id="PRO_0000099210" description="Immunodominant envelope protein p35">
    <location>
        <begin position="1"/>
        <end position="327"/>
    </location>
</feature>
<feature type="transmembrane region" description="Helical" evidence="2">
    <location>
        <begin position="291"/>
        <end position="311"/>
    </location>
</feature>
<feature type="region of interest" description="Disordered" evidence="3">
    <location>
        <begin position="41"/>
        <end position="69"/>
    </location>
</feature>
<feature type="compositionally biased region" description="Basic and acidic residues" evidence="3">
    <location>
        <begin position="59"/>
        <end position="69"/>
    </location>
</feature>
<reference key="1">
    <citation type="journal article" date="2000" name="J. Virol.">
        <title>The genome of fowlpox virus.</title>
        <authorList>
            <person name="Afonso C.L."/>
            <person name="Tulman E.R."/>
            <person name="Lu Z."/>
            <person name="Zsak L."/>
            <person name="Kutish G.F."/>
            <person name="Rock D.L."/>
        </authorList>
    </citation>
    <scope>NUCLEOTIDE SEQUENCE [LARGE SCALE GENOMIC DNA]</scope>
</reference>